<evidence type="ECO:0000255" key="1">
    <source>
        <dbReference type="HAMAP-Rule" id="MF_00294"/>
    </source>
</evidence>
<evidence type="ECO:0000305" key="2"/>
<sequence>MAKGKENRIIITIECTEAKKEGKPVSRYSTTKNKKNTTERLLLKKYNPNLQRHTVHKEIK</sequence>
<comment type="similarity">
    <text evidence="1">Belongs to the bacterial ribosomal protein bL33 family.</text>
</comment>
<keyword id="KW-0687">Ribonucleoprotein</keyword>
<keyword id="KW-0689">Ribosomal protein</keyword>
<protein>
    <recommendedName>
        <fullName evidence="1">Large ribosomal subunit protein bL33</fullName>
    </recommendedName>
    <alternativeName>
        <fullName evidence="2">50S ribosomal protein L33</fullName>
    </alternativeName>
</protein>
<proteinExistence type="inferred from homology"/>
<feature type="chain" id="PRO_1000115122" description="Large ribosomal subunit protein bL33">
    <location>
        <begin position="1"/>
        <end position="60"/>
    </location>
</feature>
<organism>
    <name type="scientific">Chlorobium limicola (strain DSM 245 / NBRC 103803 / 6330)</name>
    <dbReference type="NCBI Taxonomy" id="290315"/>
    <lineage>
        <taxon>Bacteria</taxon>
        <taxon>Pseudomonadati</taxon>
        <taxon>Chlorobiota</taxon>
        <taxon>Chlorobiia</taxon>
        <taxon>Chlorobiales</taxon>
        <taxon>Chlorobiaceae</taxon>
        <taxon>Chlorobium/Pelodictyon group</taxon>
        <taxon>Chlorobium</taxon>
    </lineage>
</organism>
<accession>B3EDH8</accession>
<reference key="1">
    <citation type="submission" date="2008-05" db="EMBL/GenBank/DDBJ databases">
        <title>Complete sequence of Chlorobium limicola DSM 245.</title>
        <authorList>
            <consortium name="US DOE Joint Genome Institute"/>
            <person name="Lucas S."/>
            <person name="Copeland A."/>
            <person name="Lapidus A."/>
            <person name="Glavina del Rio T."/>
            <person name="Dalin E."/>
            <person name="Tice H."/>
            <person name="Bruce D."/>
            <person name="Goodwin L."/>
            <person name="Pitluck S."/>
            <person name="Schmutz J."/>
            <person name="Larimer F."/>
            <person name="Land M."/>
            <person name="Hauser L."/>
            <person name="Kyrpides N."/>
            <person name="Ovchinnikova G."/>
            <person name="Zhao F."/>
            <person name="Li T."/>
            <person name="Liu Z."/>
            <person name="Overmann J."/>
            <person name="Bryant D.A."/>
            <person name="Richardson P."/>
        </authorList>
    </citation>
    <scope>NUCLEOTIDE SEQUENCE [LARGE SCALE GENOMIC DNA]</scope>
    <source>
        <strain>DSM 245 / NBRC 103803 / 6330</strain>
    </source>
</reference>
<dbReference type="EMBL" id="CP001097">
    <property type="protein sequence ID" value="ACD90603.1"/>
    <property type="molecule type" value="Genomic_DNA"/>
</dbReference>
<dbReference type="RefSeq" id="WP_012466479.1">
    <property type="nucleotide sequence ID" value="NC_010803.1"/>
</dbReference>
<dbReference type="SMR" id="B3EDH8"/>
<dbReference type="STRING" id="290315.Clim_1554"/>
<dbReference type="KEGG" id="cli:Clim_1554"/>
<dbReference type="eggNOG" id="COG0267">
    <property type="taxonomic scope" value="Bacteria"/>
</dbReference>
<dbReference type="HOGENOM" id="CLU_190949_3_0_10"/>
<dbReference type="OrthoDB" id="9801333at2"/>
<dbReference type="Proteomes" id="UP000008841">
    <property type="component" value="Chromosome"/>
</dbReference>
<dbReference type="GO" id="GO:0005737">
    <property type="term" value="C:cytoplasm"/>
    <property type="evidence" value="ECO:0007669"/>
    <property type="project" value="UniProtKB-ARBA"/>
</dbReference>
<dbReference type="GO" id="GO:1990904">
    <property type="term" value="C:ribonucleoprotein complex"/>
    <property type="evidence" value="ECO:0007669"/>
    <property type="project" value="UniProtKB-KW"/>
</dbReference>
<dbReference type="GO" id="GO:0005840">
    <property type="term" value="C:ribosome"/>
    <property type="evidence" value="ECO:0007669"/>
    <property type="project" value="UniProtKB-KW"/>
</dbReference>
<dbReference type="GO" id="GO:0003735">
    <property type="term" value="F:structural constituent of ribosome"/>
    <property type="evidence" value="ECO:0007669"/>
    <property type="project" value="InterPro"/>
</dbReference>
<dbReference type="GO" id="GO:0006412">
    <property type="term" value="P:translation"/>
    <property type="evidence" value="ECO:0007669"/>
    <property type="project" value="UniProtKB-UniRule"/>
</dbReference>
<dbReference type="Gene3D" id="2.20.28.120">
    <property type="entry name" value="Ribosomal protein L33"/>
    <property type="match status" value="1"/>
</dbReference>
<dbReference type="HAMAP" id="MF_00294">
    <property type="entry name" value="Ribosomal_bL33"/>
    <property type="match status" value="1"/>
</dbReference>
<dbReference type="InterPro" id="IPR001705">
    <property type="entry name" value="Ribosomal_bL33"/>
</dbReference>
<dbReference type="InterPro" id="IPR038584">
    <property type="entry name" value="Ribosomal_bL33_sf"/>
</dbReference>
<dbReference type="InterPro" id="IPR011332">
    <property type="entry name" value="Ribosomal_zn-bd"/>
</dbReference>
<dbReference type="NCBIfam" id="NF001764">
    <property type="entry name" value="PRK00504.1"/>
    <property type="match status" value="1"/>
</dbReference>
<dbReference type="NCBIfam" id="NF001860">
    <property type="entry name" value="PRK00595.1"/>
    <property type="match status" value="1"/>
</dbReference>
<dbReference type="NCBIfam" id="TIGR01023">
    <property type="entry name" value="rpmG_bact"/>
    <property type="match status" value="1"/>
</dbReference>
<dbReference type="PANTHER" id="PTHR43168">
    <property type="entry name" value="50S RIBOSOMAL PROTEIN L33, CHLOROPLASTIC"/>
    <property type="match status" value="1"/>
</dbReference>
<dbReference type="PANTHER" id="PTHR43168:SF2">
    <property type="entry name" value="LARGE RIBOSOMAL SUBUNIT PROTEIN BL33C"/>
    <property type="match status" value="1"/>
</dbReference>
<dbReference type="Pfam" id="PF00471">
    <property type="entry name" value="Ribosomal_L33"/>
    <property type="match status" value="1"/>
</dbReference>
<dbReference type="SUPFAM" id="SSF57829">
    <property type="entry name" value="Zn-binding ribosomal proteins"/>
    <property type="match status" value="1"/>
</dbReference>
<gene>
    <name evidence="1" type="primary">rpmG</name>
    <name type="ordered locus">Clim_1554</name>
</gene>
<name>RL33_CHLL2</name>